<keyword id="KW-1003">Cell membrane</keyword>
<keyword id="KW-0276">Fatty acid metabolism</keyword>
<keyword id="KW-0436">Ligase</keyword>
<keyword id="KW-0443">Lipid metabolism</keyword>
<keyword id="KW-0445">Lipid transport</keyword>
<keyword id="KW-0472">Membrane</keyword>
<keyword id="KW-0547">Nucleotide-binding</keyword>
<keyword id="KW-1185">Reference proteome</keyword>
<keyword id="KW-0812">Transmembrane</keyword>
<keyword id="KW-1133">Transmembrane helix</keyword>
<keyword id="KW-0813">Transport</keyword>
<gene>
    <name type="primary">Slc27a6</name>
    <name type="synonym">Acsvl2</name>
    <name type="synonym">Facvl2</name>
    <name type="synonym">Fatp1</name>
</gene>
<feature type="chain" id="PRO_0000449573" description="Long-chain fatty acid transport protein 6">
    <location>
        <begin position="1"/>
        <end position="619"/>
    </location>
</feature>
<feature type="transmembrane region" description="Helical" evidence="2">
    <location>
        <begin position="22"/>
        <end position="42"/>
    </location>
</feature>
<feature type="transmembrane region" description="Helical" evidence="2">
    <location>
        <begin position="119"/>
        <end position="139"/>
    </location>
</feature>
<feature type="binding site" evidence="2">
    <location>
        <begin position="221"/>
        <end position="232"/>
    </location>
    <ligand>
        <name>AMP</name>
        <dbReference type="ChEBI" id="CHEBI:456215"/>
    </ligand>
</feature>
<protein>
    <recommendedName>
        <fullName evidence="5">Long-chain fatty acid transport protein 6</fullName>
        <shortName evidence="4">FATP-6</shortName>
        <shortName>Fatty acid transport protein 6</shortName>
    </recommendedName>
    <alternativeName>
        <fullName>Arachidonate--CoA ligase</fullName>
        <ecNumber evidence="3">6.2.1.15</ecNumber>
    </alternativeName>
    <alternativeName>
        <fullName>Fatty-acid-coenzyme A ligase, very long-chain 2</fullName>
    </alternativeName>
    <alternativeName>
        <fullName>Long-chain-fatty-acid--CoA ligase</fullName>
        <ecNumber evidence="3">6.2.1.3</ecNumber>
    </alternativeName>
    <alternativeName>
        <fullName>Solute carrier family 27 member 6</fullName>
    </alternativeName>
    <alternativeName>
        <fullName>Very long-chain acyl-CoA synthetase homolog 1</fullName>
        <shortName evidence="4">VLACS2</shortName>
        <shortName evidence="4">VLCSH1</shortName>
        <shortName>mVLCS-H1</shortName>
        <ecNumber evidence="3">6.2.1.-</ecNumber>
    </alternativeName>
</protein>
<organism>
    <name type="scientific">Mus musculus</name>
    <name type="common">Mouse</name>
    <dbReference type="NCBI Taxonomy" id="10090"/>
    <lineage>
        <taxon>Eukaryota</taxon>
        <taxon>Metazoa</taxon>
        <taxon>Chordata</taxon>
        <taxon>Craniata</taxon>
        <taxon>Vertebrata</taxon>
        <taxon>Euteleostomi</taxon>
        <taxon>Mammalia</taxon>
        <taxon>Eutheria</taxon>
        <taxon>Euarchontoglires</taxon>
        <taxon>Glires</taxon>
        <taxon>Rodentia</taxon>
        <taxon>Myomorpha</taxon>
        <taxon>Muroidea</taxon>
        <taxon>Muridae</taxon>
        <taxon>Murinae</taxon>
        <taxon>Mus</taxon>
        <taxon>Mus</taxon>
    </lineage>
</organism>
<sequence length="619" mass="70192">MLLSWLTGLGAGLLSLHFLQKLLFPYFWDDFWYLLKVVRYGIQMEMYKLRGELVTVLDKFLSHTRKQPRKAFIIYEGDVYTYEDVDKRSNRIAHALLNHSSLKRGDVVALLMSNEPDFVHVWFGLAKLGCVVAFLNSNLRFDSLLHCINTCEPTAVVVGGDLLGSIEEILPSLPKHVRVWGMKDSVPEGIDSLQEKLSLASDEPVPPSHHVTSSLKSTCLYIFTSGTTGLPKAAVISQLQVLKGSVGLWAFGCTADDIIYITLPLYHSSGSLLGIGGCVELGATCVLKKKFSASQFWNDCKKYNVTVFQYIGELCRYLCKQPQREGEKDHRVRLAVGNGLSSDVWRQFLDRFGNIKMCELYGATEGNIVFMNHTGKIGSVGRANFFYSLFFSFELIKYDFQKDEPWRNGQGWCSCVRKGEPGLLISRVNKKNPFFGYAGSDTHTKSKLLFDVFRKGDVYFNTGDLMFQDQENFVYFWDRLGDTFRWKGENVATTEVADVLGRLDFIQEANVYGVRVPGYEGKAGMTSVILKPNKSLDLEKMYNQVVTSLPAYACPLFLRIQDKMETTGTFKLKKLQLVEEGFDPLKISDPLYFMDNLKKSYVPLTEEIYNQIMSEEVKL</sequence>
<name>S27A6_MOUSE</name>
<reference key="1">
    <citation type="journal article" date="2009" name="PLoS Biol.">
        <title>Lineage-specific biology revealed by a finished genome assembly of the mouse.</title>
        <authorList>
            <person name="Church D.M."/>
            <person name="Goodstadt L."/>
            <person name="Hillier L.W."/>
            <person name="Zody M.C."/>
            <person name="Goldstein S."/>
            <person name="She X."/>
            <person name="Bult C.J."/>
            <person name="Agarwala R."/>
            <person name="Cherry J.L."/>
            <person name="DiCuccio M."/>
            <person name="Hlavina W."/>
            <person name="Kapustin Y."/>
            <person name="Meric P."/>
            <person name="Maglott D."/>
            <person name="Birtle Z."/>
            <person name="Marques A.C."/>
            <person name="Graves T."/>
            <person name="Zhou S."/>
            <person name="Teague B."/>
            <person name="Potamousis K."/>
            <person name="Churas C."/>
            <person name="Place M."/>
            <person name="Herschleb J."/>
            <person name="Runnheim R."/>
            <person name="Forrest D."/>
            <person name="Amos-Landgraf J."/>
            <person name="Schwartz D.C."/>
            <person name="Cheng Z."/>
            <person name="Lindblad-Toh K."/>
            <person name="Eichler E.E."/>
            <person name="Ponting C.P."/>
        </authorList>
    </citation>
    <scope>NUCLEOTIDE SEQUENCE [LARGE SCALE GENOMIC DNA]</scope>
    <source>
        <strain>C57BL/6J</strain>
    </source>
</reference>
<reference key="2">
    <citation type="journal article" date="2005" name="J. Biol. Chem.">
        <title>Comparative biochemical studies of the murine fatty acid transport proteins (FATP) expressed in yeast.</title>
        <authorList>
            <person name="DiRusso C.C."/>
            <person name="Li H."/>
            <person name="Darwis D."/>
            <person name="Watkins P.A."/>
            <person name="Berger J."/>
            <person name="Black P.N."/>
        </authorList>
    </citation>
    <scope>FUNCTION</scope>
    <scope>CATALYTIC ACTIVITY</scope>
    <scope>SUBCELLULAR LOCATION</scope>
</reference>
<reference evidence="7" key="3">
    <citation type="journal article" date="2010" name="Cell">
        <title>A tissue-specific atlas of mouse protein phosphorylation and expression.</title>
        <authorList>
            <person name="Huttlin E.L."/>
            <person name="Jedrychowski M.P."/>
            <person name="Elias J.E."/>
            <person name="Goswami T."/>
            <person name="Rad R."/>
            <person name="Beausoleil S.A."/>
            <person name="Villen J."/>
            <person name="Haas W."/>
            <person name="Sowa M.E."/>
            <person name="Gygi S.P."/>
        </authorList>
    </citation>
    <scope>IDENTIFICATION BY MASS SPECTROMETRY [LARGE SCALE ANALYSIS]</scope>
</reference>
<comment type="function">
    <text evidence="1 3">Mediates the import of long-chain fatty acids (LCFA) into the cell by facilitating their transport at the plasma membrane (By similarity). Also functions as an acyl-CoA ligase catalyzing the ATP-dependent formation of fatty acyl-CoA using LCFA and very-long-chain fatty acids (VLCFA) as substrates (PubMed:15699031). Plays a pivotal role in regulating available LCFA substrates from exogenous sources in tissues undergoing high levels of beta-oxidation such as the heart (By similarity).</text>
</comment>
<comment type="catalytic activity">
    <reaction evidence="1">
        <text>a fatty acid(in) = a fatty acid(out)</text>
        <dbReference type="Rhea" id="RHEA:38879"/>
        <dbReference type="ChEBI" id="CHEBI:28868"/>
    </reaction>
</comment>
<comment type="catalytic activity">
    <reaction evidence="1">
        <text>hexadecanoate(out) = hexadecanoate(in)</text>
        <dbReference type="Rhea" id="RHEA:45256"/>
        <dbReference type="ChEBI" id="CHEBI:7896"/>
    </reaction>
</comment>
<comment type="catalytic activity">
    <reaction evidence="1">
        <text>(9Z,12Z)-octadecadienoate(out) = (9Z,12Z)-octadecadienoate(in)</text>
        <dbReference type="Rhea" id="RHEA:45264"/>
        <dbReference type="ChEBI" id="CHEBI:30245"/>
    </reaction>
</comment>
<comment type="catalytic activity">
    <reaction evidence="1">
        <text>(9Z)-octadecenoate(out) = (9Z)-octadecenoate(in)</text>
        <dbReference type="Rhea" id="RHEA:33655"/>
        <dbReference type="ChEBI" id="CHEBI:30823"/>
    </reaction>
</comment>
<comment type="catalytic activity">
    <reaction evidence="3">
        <text>a very long-chain fatty acid + ATP + CoA = a very long-chain fatty acyl-CoA + AMP + diphosphate</text>
        <dbReference type="Rhea" id="RHEA:54536"/>
        <dbReference type="ChEBI" id="CHEBI:30616"/>
        <dbReference type="ChEBI" id="CHEBI:33019"/>
        <dbReference type="ChEBI" id="CHEBI:57287"/>
        <dbReference type="ChEBI" id="CHEBI:58950"/>
        <dbReference type="ChEBI" id="CHEBI:138261"/>
        <dbReference type="ChEBI" id="CHEBI:456215"/>
    </reaction>
    <physiologicalReaction direction="left-to-right" evidence="3">
        <dbReference type="Rhea" id="RHEA:54537"/>
    </physiologicalReaction>
</comment>
<comment type="catalytic activity">
    <reaction evidence="3">
        <text>tetracosanoate + ATP + CoA = tetracosanoyl-CoA + AMP + diphosphate</text>
        <dbReference type="Rhea" id="RHEA:33639"/>
        <dbReference type="ChEBI" id="CHEBI:30616"/>
        <dbReference type="ChEBI" id="CHEBI:31014"/>
        <dbReference type="ChEBI" id="CHEBI:33019"/>
        <dbReference type="ChEBI" id="CHEBI:57287"/>
        <dbReference type="ChEBI" id="CHEBI:65052"/>
        <dbReference type="ChEBI" id="CHEBI:456215"/>
    </reaction>
    <physiologicalReaction direction="left-to-right" evidence="3">
        <dbReference type="Rhea" id="RHEA:33640"/>
    </physiologicalReaction>
</comment>
<comment type="catalytic activity">
    <reaction evidence="3">
        <text>a long-chain fatty acid + ATP + CoA = a long-chain fatty acyl-CoA + AMP + diphosphate</text>
        <dbReference type="Rhea" id="RHEA:15421"/>
        <dbReference type="ChEBI" id="CHEBI:30616"/>
        <dbReference type="ChEBI" id="CHEBI:33019"/>
        <dbReference type="ChEBI" id="CHEBI:57287"/>
        <dbReference type="ChEBI" id="CHEBI:57560"/>
        <dbReference type="ChEBI" id="CHEBI:83139"/>
        <dbReference type="ChEBI" id="CHEBI:456215"/>
        <dbReference type="EC" id="6.2.1.3"/>
    </reaction>
    <physiologicalReaction direction="left-to-right" evidence="3">
        <dbReference type="Rhea" id="RHEA:15422"/>
    </physiologicalReaction>
</comment>
<comment type="catalytic activity">
    <reaction evidence="3">
        <text>(9Z)-octadecenoate + ATP + CoA = (9Z)-octadecenoyl-CoA + AMP + diphosphate</text>
        <dbReference type="Rhea" id="RHEA:33607"/>
        <dbReference type="ChEBI" id="CHEBI:30616"/>
        <dbReference type="ChEBI" id="CHEBI:30823"/>
        <dbReference type="ChEBI" id="CHEBI:33019"/>
        <dbReference type="ChEBI" id="CHEBI:57287"/>
        <dbReference type="ChEBI" id="CHEBI:57387"/>
        <dbReference type="ChEBI" id="CHEBI:456215"/>
    </reaction>
    <physiologicalReaction direction="left-to-right" evidence="3">
        <dbReference type="Rhea" id="RHEA:33608"/>
    </physiologicalReaction>
</comment>
<comment type="catalytic activity">
    <reaction evidence="3">
        <text>(5Z,8Z,11Z,14Z)-eicosatetraenoate + ATP + CoA = (5Z,8Z,11Z,14Z)-eicosatetraenoyl-CoA + AMP + diphosphate</text>
        <dbReference type="Rhea" id="RHEA:19713"/>
        <dbReference type="ChEBI" id="CHEBI:30616"/>
        <dbReference type="ChEBI" id="CHEBI:32395"/>
        <dbReference type="ChEBI" id="CHEBI:33019"/>
        <dbReference type="ChEBI" id="CHEBI:57287"/>
        <dbReference type="ChEBI" id="CHEBI:57368"/>
        <dbReference type="ChEBI" id="CHEBI:456215"/>
        <dbReference type="EC" id="6.2.1.15"/>
    </reaction>
    <physiologicalReaction direction="left-to-right" evidence="3">
        <dbReference type="Rhea" id="RHEA:19714"/>
    </physiologicalReaction>
</comment>
<comment type="subcellular location">
    <subcellularLocation>
        <location evidence="1">Cell membrane</location>
        <location evidence="1">Sarcolemma</location>
        <topology evidence="2">Multi-pass membrane protein</topology>
    </subcellularLocation>
    <subcellularLocation>
        <location evidence="6">Cell membrane</location>
        <topology evidence="2">Multi-pass membrane protein</topology>
    </subcellularLocation>
    <text evidence="1">In heart is exclusively located on the sarcolemma in areas juxtaposed with small blood vessels where it colocalizes CD36.</text>
</comment>
<comment type="similarity">
    <text evidence="5">Belongs to the ATP-dependent AMP-binding enzyme family.</text>
</comment>
<proteinExistence type="evidence at protein level"/>
<dbReference type="EC" id="6.2.1.15" evidence="3"/>
<dbReference type="EC" id="6.2.1.3" evidence="3"/>
<dbReference type="EC" id="6.2.1.-" evidence="3"/>
<dbReference type="EMBL" id="AC102231">
    <property type="status" value="NOT_ANNOTATED_CDS"/>
    <property type="molecule type" value="Genomic_DNA"/>
</dbReference>
<dbReference type="EMBL" id="AC158924">
    <property type="status" value="NOT_ANNOTATED_CDS"/>
    <property type="molecule type" value="Genomic_DNA"/>
</dbReference>
<dbReference type="CCDS" id="CCDS37828.1"/>
<dbReference type="RefSeq" id="NP_001074541.1">
    <property type="nucleotide sequence ID" value="NM_001081072.1"/>
</dbReference>
<dbReference type="SMR" id="E9Q9W4"/>
<dbReference type="FunCoup" id="E9Q9W4">
    <property type="interactions" value="245"/>
</dbReference>
<dbReference type="STRING" id="10090.ENSMUSP00000025500"/>
<dbReference type="SwissLipids" id="SLP:000001143"/>
<dbReference type="iPTMnet" id="E9Q9W4"/>
<dbReference type="PhosphoSitePlus" id="E9Q9W4"/>
<dbReference type="SwissPalm" id="E9Q9W4"/>
<dbReference type="PaxDb" id="10090-ENSMUSP00000025500"/>
<dbReference type="ProteomicsDB" id="351306"/>
<dbReference type="Antibodypedia" id="1944">
    <property type="antibodies" value="85 antibodies from 21 providers"/>
</dbReference>
<dbReference type="DNASU" id="225579"/>
<dbReference type="Ensembl" id="ENSMUST00000025500.7">
    <property type="protein sequence ID" value="ENSMUSP00000025500.7"/>
    <property type="gene ID" value="ENSMUSG00000024600.9"/>
</dbReference>
<dbReference type="GeneID" id="225579"/>
<dbReference type="KEGG" id="mmu:225579"/>
<dbReference type="UCSC" id="uc008ezp.1">
    <property type="organism name" value="mouse"/>
</dbReference>
<dbReference type="AGR" id="MGI:3036230"/>
<dbReference type="CTD" id="28965"/>
<dbReference type="MGI" id="MGI:3036230">
    <property type="gene designation" value="Slc27a6"/>
</dbReference>
<dbReference type="VEuPathDB" id="HostDB:ENSMUSG00000024600"/>
<dbReference type="eggNOG" id="KOG1179">
    <property type="taxonomic scope" value="Eukaryota"/>
</dbReference>
<dbReference type="GeneTree" id="ENSGT00940000159700"/>
<dbReference type="HOGENOM" id="CLU_000022_46_2_1"/>
<dbReference type="InParanoid" id="E9Q9W4"/>
<dbReference type="OMA" id="VWRQFLD"/>
<dbReference type="OrthoDB" id="288590at2759"/>
<dbReference type="PhylomeDB" id="E9Q9W4"/>
<dbReference type="TreeFam" id="TF313430"/>
<dbReference type="Reactome" id="R-MMU-804914">
    <property type="pathway name" value="Transport of fatty acids"/>
</dbReference>
<dbReference type="BioGRID-ORCS" id="225579">
    <property type="hits" value="3 hits in 77 CRISPR screens"/>
</dbReference>
<dbReference type="PRO" id="PR:E9Q9W4"/>
<dbReference type="Proteomes" id="UP000000589">
    <property type="component" value="Chromosome 18"/>
</dbReference>
<dbReference type="RNAct" id="E9Q9W4">
    <property type="molecule type" value="protein"/>
</dbReference>
<dbReference type="Bgee" id="ENSMUSG00000024600">
    <property type="expression patterns" value="Expressed in embryonic cell in blastocyst and 60 other cell types or tissues"/>
</dbReference>
<dbReference type="GO" id="GO:0005783">
    <property type="term" value="C:endoplasmic reticulum"/>
    <property type="evidence" value="ECO:0000304"/>
    <property type="project" value="MGI"/>
</dbReference>
<dbReference type="GO" id="GO:0042383">
    <property type="term" value="C:sarcolemma"/>
    <property type="evidence" value="ECO:0007669"/>
    <property type="project" value="UniProtKB-SubCell"/>
</dbReference>
<dbReference type="GO" id="GO:0047676">
    <property type="term" value="F:arachidonate-CoA ligase activity"/>
    <property type="evidence" value="ECO:0007669"/>
    <property type="project" value="UniProtKB-EC"/>
</dbReference>
<dbReference type="GO" id="GO:0004467">
    <property type="term" value="F:long-chain fatty acid-CoA ligase activity"/>
    <property type="evidence" value="ECO:0000304"/>
    <property type="project" value="MGI"/>
</dbReference>
<dbReference type="GO" id="GO:0000166">
    <property type="term" value="F:nucleotide binding"/>
    <property type="evidence" value="ECO:0007669"/>
    <property type="project" value="UniProtKB-KW"/>
</dbReference>
<dbReference type="GO" id="GO:0031957">
    <property type="term" value="F:very long-chain fatty acid-CoA ligase activity"/>
    <property type="evidence" value="ECO:0000314"/>
    <property type="project" value="MGI"/>
</dbReference>
<dbReference type="GO" id="GO:0006869">
    <property type="term" value="P:lipid transport"/>
    <property type="evidence" value="ECO:0007669"/>
    <property type="project" value="UniProtKB-KW"/>
</dbReference>
<dbReference type="GO" id="GO:0001676">
    <property type="term" value="P:long-chain fatty acid metabolic process"/>
    <property type="evidence" value="ECO:0000304"/>
    <property type="project" value="MGI"/>
</dbReference>
<dbReference type="FunFam" id="3.30.300.30:FF:000002">
    <property type="entry name" value="Long-chain fatty acid transport protein 1"/>
    <property type="match status" value="1"/>
</dbReference>
<dbReference type="FunFam" id="3.40.50.12780:FF:000005">
    <property type="entry name" value="Solute carrier family 27 member 6"/>
    <property type="match status" value="1"/>
</dbReference>
<dbReference type="Gene3D" id="3.30.300.30">
    <property type="match status" value="1"/>
</dbReference>
<dbReference type="Gene3D" id="3.40.50.12780">
    <property type="entry name" value="N-terminal domain of ligase-like"/>
    <property type="match status" value="1"/>
</dbReference>
<dbReference type="InterPro" id="IPR025110">
    <property type="entry name" value="AMP-bd_C"/>
</dbReference>
<dbReference type="InterPro" id="IPR045851">
    <property type="entry name" value="AMP-bd_C_sf"/>
</dbReference>
<dbReference type="InterPro" id="IPR020845">
    <property type="entry name" value="AMP-binding_CS"/>
</dbReference>
<dbReference type="InterPro" id="IPR000873">
    <property type="entry name" value="AMP-dep_synth/lig_dom"/>
</dbReference>
<dbReference type="InterPro" id="IPR042099">
    <property type="entry name" value="ANL_N_sf"/>
</dbReference>
<dbReference type="NCBIfam" id="NF006134">
    <property type="entry name" value="PRK08279.1"/>
    <property type="match status" value="1"/>
</dbReference>
<dbReference type="PANTHER" id="PTHR43107">
    <property type="entry name" value="LONG-CHAIN FATTY ACID TRANSPORT PROTEIN"/>
    <property type="match status" value="1"/>
</dbReference>
<dbReference type="PANTHER" id="PTHR43107:SF10">
    <property type="entry name" value="LONG-CHAIN FATTY ACID TRANSPORT PROTEIN 6"/>
    <property type="match status" value="1"/>
</dbReference>
<dbReference type="Pfam" id="PF00501">
    <property type="entry name" value="AMP-binding"/>
    <property type="match status" value="1"/>
</dbReference>
<dbReference type="Pfam" id="PF13193">
    <property type="entry name" value="AMP-binding_C"/>
    <property type="match status" value="1"/>
</dbReference>
<dbReference type="SUPFAM" id="SSF56801">
    <property type="entry name" value="Acetyl-CoA synthetase-like"/>
    <property type="match status" value="1"/>
</dbReference>
<dbReference type="PROSITE" id="PS00455">
    <property type="entry name" value="AMP_BINDING"/>
    <property type="match status" value="1"/>
</dbReference>
<accession>E9Q9W4</accession>
<evidence type="ECO:0000250" key="1">
    <source>
        <dbReference type="UniProtKB" id="Q9Y2P4"/>
    </source>
</evidence>
<evidence type="ECO:0000255" key="2"/>
<evidence type="ECO:0000269" key="3">
    <source>
    </source>
</evidence>
<evidence type="ECO:0000303" key="4">
    <source>
    </source>
</evidence>
<evidence type="ECO:0000305" key="5"/>
<evidence type="ECO:0000305" key="6">
    <source>
    </source>
</evidence>
<evidence type="ECO:0007744" key="7">
    <source>
    </source>
</evidence>